<comment type="function">
    <text evidence="1">RNA-free RNase P that catalyzes the removal of the 5'-leader sequence from pre-tRNA to produce the mature 5'-terminus.</text>
</comment>
<comment type="catalytic activity">
    <reaction evidence="1">
        <text>Endonucleolytic cleavage of RNA, removing 5'-extranucleotides from tRNA precursor.</text>
        <dbReference type="EC" id="3.1.26.5"/>
    </reaction>
</comment>
<comment type="similarity">
    <text evidence="1">Belongs to the HARP family.</text>
</comment>
<organism>
    <name type="scientific">Alkalilimnicola ehrlichii (strain ATCC BAA-1101 / DSM 17681 / MLHE-1)</name>
    <dbReference type="NCBI Taxonomy" id="187272"/>
    <lineage>
        <taxon>Bacteria</taxon>
        <taxon>Pseudomonadati</taxon>
        <taxon>Pseudomonadota</taxon>
        <taxon>Gammaproteobacteria</taxon>
        <taxon>Chromatiales</taxon>
        <taxon>Ectothiorhodospiraceae</taxon>
        <taxon>Alkalilimnicola</taxon>
    </lineage>
</organism>
<reference key="1">
    <citation type="submission" date="2006-08" db="EMBL/GenBank/DDBJ databases">
        <title>Complete sequence of Alkalilimnicola ehrilichei MLHE-1.</title>
        <authorList>
            <person name="Copeland A."/>
            <person name="Lucas S."/>
            <person name="Lapidus A."/>
            <person name="Barry K."/>
            <person name="Detter J.C."/>
            <person name="Glavina del Rio T."/>
            <person name="Hammon N."/>
            <person name="Israni S."/>
            <person name="Dalin E."/>
            <person name="Tice H."/>
            <person name="Pitluck S."/>
            <person name="Sims D."/>
            <person name="Brettin T."/>
            <person name="Bruce D."/>
            <person name="Han C."/>
            <person name="Tapia R."/>
            <person name="Gilna P."/>
            <person name="Schmutz J."/>
            <person name="Larimer F."/>
            <person name="Land M."/>
            <person name="Hauser L."/>
            <person name="Kyrpides N."/>
            <person name="Mikhailova N."/>
            <person name="Oremland R.S."/>
            <person name="Hoeft S.E."/>
            <person name="Switzer-Blum J."/>
            <person name="Kulp T."/>
            <person name="King G."/>
            <person name="Tabita R."/>
            <person name="Witte B."/>
            <person name="Santini J.M."/>
            <person name="Basu P."/>
            <person name="Hollibaugh J.T."/>
            <person name="Xie G."/>
            <person name="Stolz J.F."/>
            <person name="Richardson P."/>
        </authorList>
    </citation>
    <scope>NUCLEOTIDE SEQUENCE [LARGE SCALE GENOMIC DNA]</scope>
    <source>
        <strain>ATCC BAA-1101 / DSM 17681 / MLHE-1</strain>
    </source>
</reference>
<keyword id="KW-0255">Endonuclease</keyword>
<keyword id="KW-0378">Hydrolase</keyword>
<keyword id="KW-0540">Nuclease</keyword>
<keyword id="KW-1185">Reference proteome</keyword>
<keyword id="KW-0819">tRNA processing</keyword>
<protein>
    <recommendedName>
        <fullName evidence="1">RNA-free ribonuclease P</fullName>
        <shortName evidence="1">RNA-free RNase P</shortName>
        <ecNumber evidence="1">3.1.26.5</ecNumber>
    </recommendedName>
    <alternativeName>
        <fullName evidence="1">Protein-only RNase P</fullName>
    </alternativeName>
</protein>
<gene>
    <name type="ordered locus">Mlg_2556</name>
</gene>
<dbReference type="EC" id="3.1.26.5" evidence="1"/>
<dbReference type="EMBL" id="CP000453">
    <property type="protein sequence ID" value="ABI57896.1"/>
    <property type="molecule type" value="Genomic_DNA"/>
</dbReference>
<dbReference type="RefSeq" id="WP_011630289.1">
    <property type="nucleotide sequence ID" value="NC_008340.1"/>
</dbReference>
<dbReference type="SMR" id="Q0A5J1"/>
<dbReference type="KEGG" id="aeh:Mlg_2556"/>
<dbReference type="eggNOG" id="COG1458">
    <property type="taxonomic scope" value="Bacteria"/>
</dbReference>
<dbReference type="HOGENOM" id="CLU_109672_0_0_6"/>
<dbReference type="OrthoDB" id="263154at2"/>
<dbReference type="Proteomes" id="UP000001962">
    <property type="component" value="Chromosome"/>
</dbReference>
<dbReference type="GO" id="GO:0004526">
    <property type="term" value="F:ribonuclease P activity"/>
    <property type="evidence" value="ECO:0007669"/>
    <property type="project" value="UniProtKB-UniRule"/>
</dbReference>
<dbReference type="GO" id="GO:0001682">
    <property type="term" value="P:tRNA 5'-leader removal"/>
    <property type="evidence" value="ECO:0007669"/>
    <property type="project" value="UniProtKB-UniRule"/>
</dbReference>
<dbReference type="CDD" id="cd18691">
    <property type="entry name" value="PIN_VapC-like"/>
    <property type="match status" value="1"/>
</dbReference>
<dbReference type="HAMAP" id="MF_01078">
    <property type="entry name" value="RNA_free_RNase_P"/>
    <property type="match status" value="1"/>
</dbReference>
<dbReference type="InterPro" id="IPR014856">
    <property type="entry name" value="RNA_free_RNase_P"/>
</dbReference>
<dbReference type="NCBIfam" id="NF003344">
    <property type="entry name" value="PRK04358.1-5"/>
    <property type="match status" value="1"/>
</dbReference>
<dbReference type="NCBIfam" id="TIGR03875">
    <property type="entry name" value="RNA_lig_partner"/>
    <property type="match status" value="1"/>
</dbReference>
<dbReference type="PANTHER" id="PTHR41173:SF1">
    <property type="entry name" value="RNA-FREE RIBONUCLEASE P"/>
    <property type="match status" value="1"/>
</dbReference>
<dbReference type="PANTHER" id="PTHR41173">
    <property type="entry name" value="UPF0278 PROTEIN TK1425"/>
    <property type="match status" value="1"/>
</dbReference>
<dbReference type="Pfam" id="PF08745">
    <property type="entry name" value="PIN_5"/>
    <property type="match status" value="1"/>
</dbReference>
<evidence type="ECO:0000255" key="1">
    <source>
        <dbReference type="HAMAP-Rule" id="MF_01078"/>
    </source>
</evidence>
<proteinExistence type="inferred from homology"/>
<sequence length="192" mass="22094">MRRFVLDTSVFTNPHCAVQFGEDPLAGVQTFLHLARRCPAEFYMPLSVYDEFRRMRDLAEMAADFETDVWVRSPRRFSMTIPAEILYEFIHELRGRIDRGLRIAEEHTRQAGAATDMRPELIASLRERYREAMRKGLVDSREDVDAVLLAMELDAELVSADEGMRKLGNRMGVKLLTADYLRQVMENLGAGH</sequence>
<name>RFRNP_ALKEH</name>
<accession>Q0A5J1</accession>
<feature type="chain" id="PRO_0000366685" description="RNA-free ribonuclease P">
    <location>
        <begin position="1"/>
        <end position="192"/>
    </location>
</feature>